<keyword id="KW-0378">Hydrolase</keyword>
<keyword id="KW-0479">Metal-binding</keyword>
<keyword id="KW-1185">Reference proteome</keyword>
<keyword id="KW-0862">Zinc</keyword>
<protein>
    <recommendedName>
        <fullName>Cytidine deaminase 3</fullName>
        <ecNumber>3.5.4.5</ecNumber>
    </recommendedName>
</protein>
<accession>Q9S847</accession>
<accession>Q9ZT33</accession>
<gene>
    <name type="primary">CDA3</name>
    <name type="synonym">DESF</name>
    <name type="ordered locus">At4g29630</name>
    <name type="ORF">T16L4.140</name>
</gene>
<evidence type="ECO:0000250" key="1"/>
<evidence type="ECO:0000255" key="2">
    <source>
        <dbReference type="PROSITE-ProRule" id="PRU01083"/>
    </source>
</evidence>
<evidence type="ECO:0000305" key="3"/>
<feature type="chain" id="PRO_0000429145" description="Cytidine deaminase 3">
    <location>
        <begin position="1"/>
        <end position="223"/>
    </location>
</feature>
<feature type="domain" description="CMP/dCMP-type deaminase 1" evidence="2">
    <location>
        <begin position="21"/>
        <end position="154"/>
    </location>
</feature>
<feature type="domain" description="CMP/dCMP-type deaminase 2" evidence="2">
    <location>
        <begin position="184"/>
        <end position="223"/>
    </location>
</feature>
<feature type="active site" description="Proton donor" evidence="1">
    <location>
        <position position="77"/>
    </location>
</feature>
<feature type="binding site" evidence="1">
    <location>
        <begin position="62"/>
        <end position="64"/>
    </location>
    <ligand>
        <name>substrate</name>
    </ligand>
</feature>
<feature type="binding site" evidence="1">
    <location>
        <position position="75"/>
    </location>
    <ligand>
        <name>Zn(2+)</name>
        <dbReference type="ChEBI" id="CHEBI:29105"/>
        <note>catalytic</note>
    </ligand>
</feature>
<feature type="binding site" evidence="1">
    <location>
        <position position="110"/>
    </location>
    <ligand>
        <name>Zn(2+)</name>
        <dbReference type="ChEBI" id="CHEBI:29105"/>
        <note>catalytic</note>
    </ligand>
</feature>
<feature type="binding site" evidence="1">
    <location>
        <position position="113"/>
    </location>
    <ligand>
        <name>Zn(2+)</name>
        <dbReference type="ChEBI" id="CHEBI:29105"/>
        <note>catalytic</note>
    </ligand>
</feature>
<feature type="sequence conflict" description="In Ref. 2; AAC69568." evidence="3" ref="2">
    <original>Y</original>
    <variation>H</variation>
    <location>
        <position position="134"/>
    </location>
</feature>
<dbReference type="EC" id="3.5.4.5"/>
<dbReference type="EMBL" id="AF121877">
    <property type="protein sequence ID" value="AAD30446.1"/>
    <property type="molecule type" value="Genomic_DNA"/>
</dbReference>
<dbReference type="EMBL" id="AF080676">
    <property type="protein sequence ID" value="AAC69568.1"/>
    <property type="status" value="ALT_SEQ"/>
    <property type="molecule type" value="Genomic_DNA"/>
</dbReference>
<dbReference type="EMBL" id="AL079344">
    <property type="protein sequence ID" value="CAB45323.1"/>
    <property type="molecule type" value="Genomic_DNA"/>
</dbReference>
<dbReference type="EMBL" id="AL161575">
    <property type="protein sequence ID" value="CAB79721.1"/>
    <property type="molecule type" value="Genomic_DNA"/>
</dbReference>
<dbReference type="EMBL" id="CP002687">
    <property type="protein sequence ID" value="AEE85653.1"/>
    <property type="molecule type" value="Genomic_DNA"/>
</dbReference>
<dbReference type="EMBL" id="DQ056662">
    <property type="protein sequence ID" value="AAY78809.1"/>
    <property type="molecule type" value="mRNA"/>
</dbReference>
<dbReference type="PIR" id="T09926">
    <property type="entry name" value="T09926"/>
</dbReference>
<dbReference type="RefSeq" id="NP_194692.1">
    <property type="nucleotide sequence ID" value="NM_119108.1"/>
</dbReference>
<dbReference type="SMR" id="Q9S847"/>
<dbReference type="FunCoup" id="Q9S847">
    <property type="interactions" value="126"/>
</dbReference>
<dbReference type="STRING" id="3702.Q9S847"/>
<dbReference type="PaxDb" id="3702-AT4G29630.1"/>
<dbReference type="EnsemblPlants" id="AT4G29630.1">
    <property type="protein sequence ID" value="AT4G29630.1"/>
    <property type="gene ID" value="AT4G29630"/>
</dbReference>
<dbReference type="GeneID" id="829084"/>
<dbReference type="Gramene" id="AT4G29630.1">
    <property type="protein sequence ID" value="AT4G29630.1"/>
    <property type="gene ID" value="AT4G29630"/>
</dbReference>
<dbReference type="KEGG" id="ath:AT4G29630"/>
<dbReference type="Araport" id="AT4G29630"/>
<dbReference type="TAIR" id="AT4G29630"/>
<dbReference type="eggNOG" id="KOG0833">
    <property type="taxonomic scope" value="Eukaryota"/>
</dbReference>
<dbReference type="HOGENOM" id="CLU_052424_1_0_1"/>
<dbReference type="InParanoid" id="Q9S847"/>
<dbReference type="OMA" id="MSTHENS"/>
<dbReference type="PhylomeDB" id="Q9S847"/>
<dbReference type="BioCyc" id="ARA:AT4G29630-MONOMER"/>
<dbReference type="PRO" id="PR:Q9S847"/>
<dbReference type="Proteomes" id="UP000006548">
    <property type="component" value="Chromosome 4"/>
</dbReference>
<dbReference type="GO" id="GO:0005737">
    <property type="term" value="C:cytoplasm"/>
    <property type="evidence" value="ECO:0007669"/>
    <property type="project" value="UniProtKB-ARBA"/>
</dbReference>
<dbReference type="GO" id="GO:0004126">
    <property type="term" value="F:cytidine deaminase activity"/>
    <property type="evidence" value="ECO:0007669"/>
    <property type="project" value="UniProtKB-EC"/>
</dbReference>
<dbReference type="GO" id="GO:0042802">
    <property type="term" value="F:identical protein binding"/>
    <property type="evidence" value="ECO:0007669"/>
    <property type="project" value="UniProtKB-ARBA"/>
</dbReference>
<dbReference type="GO" id="GO:0008270">
    <property type="term" value="F:zinc ion binding"/>
    <property type="evidence" value="ECO:0007669"/>
    <property type="project" value="InterPro"/>
</dbReference>
<dbReference type="GO" id="GO:0009972">
    <property type="term" value="P:cytidine deamination"/>
    <property type="evidence" value="ECO:0007669"/>
    <property type="project" value="InterPro"/>
</dbReference>
<dbReference type="CDD" id="cd01283">
    <property type="entry name" value="cytidine_deaminase"/>
    <property type="match status" value="1"/>
</dbReference>
<dbReference type="FunFam" id="3.40.140.10:FF:000041">
    <property type="entry name" value="Cytidine deaminase"/>
    <property type="match status" value="1"/>
</dbReference>
<dbReference type="Gene3D" id="3.40.140.10">
    <property type="entry name" value="Cytidine Deaminase, domain 2"/>
    <property type="match status" value="2"/>
</dbReference>
<dbReference type="InterPro" id="IPR016192">
    <property type="entry name" value="APOBEC/CMP_deaminase_Zn-bd"/>
</dbReference>
<dbReference type="InterPro" id="IPR002125">
    <property type="entry name" value="CMP_dCMP_dom"/>
</dbReference>
<dbReference type="InterPro" id="IPR013171">
    <property type="entry name" value="Cyd/dCyd_deaminase_Zn-bd"/>
</dbReference>
<dbReference type="InterPro" id="IPR050202">
    <property type="entry name" value="Cyt/Deoxycyt_deaminase"/>
</dbReference>
<dbReference type="InterPro" id="IPR006263">
    <property type="entry name" value="Cyt_deam_dimer"/>
</dbReference>
<dbReference type="InterPro" id="IPR016193">
    <property type="entry name" value="Cytidine_deaminase-like"/>
</dbReference>
<dbReference type="NCBIfam" id="TIGR01355">
    <property type="entry name" value="cyt_deam_dimer"/>
    <property type="match status" value="1"/>
</dbReference>
<dbReference type="PANTHER" id="PTHR11644">
    <property type="entry name" value="CYTIDINE DEAMINASE"/>
    <property type="match status" value="1"/>
</dbReference>
<dbReference type="PANTHER" id="PTHR11644:SF2">
    <property type="entry name" value="CYTIDINE DEAMINASE"/>
    <property type="match status" value="1"/>
</dbReference>
<dbReference type="Pfam" id="PF00383">
    <property type="entry name" value="dCMP_cyt_deam_1"/>
    <property type="match status" value="1"/>
</dbReference>
<dbReference type="Pfam" id="PF08211">
    <property type="entry name" value="dCMP_cyt_deam_2"/>
    <property type="match status" value="1"/>
</dbReference>
<dbReference type="PIRSF" id="PIRSF006334">
    <property type="entry name" value="Cdd_plus_pseudo"/>
    <property type="match status" value="1"/>
</dbReference>
<dbReference type="SUPFAM" id="SSF53927">
    <property type="entry name" value="Cytidine deaminase-like"/>
    <property type="match status" value="2"/>
</dbReference>
<dbReference type="PROSITE" id="PS00903">
    <property type="entry name" value="CYT_DCMP_DEAMINASES_1"/>
    <property type="match status" value="1"/>
</dbReference>
<dbReference type="PROSITE" id="PS51747">
    <property type="entry name" value="CYT_DCMP_DEAMINASES_2"/>
    <property type="match status" value="2"/>
</dbReference>
<proteinExistence type="evidence at transcript level"/>
<comment type="function">
    <text evidence="1">This enzyme scavenges exogenous and endogenous cytidine and 2'-deoxycytidine for UMP synthesis.</text>
</comment>
<comment type="catalytic activity">
    <reaction>
        <text>cytidine + H2O + H(+) = uridine + NH4(+)</text>
        <dbReference type="Rhea" id="RHEA:16069"/>
        <dbReference type="ChEBI" id="CHEBI:15377"/>
        <dbReference type="ChEBI" id="CHEBI:15378"/>
        <dbReference type="ChEBI" id="CHEBI:16704"/>
        <dbReference type="ChEBI" id="CHEBI:17562"/>
        <dbReference type="ChEBI" id="CHEBI:28938"/>
        <dbReference type="EC" id="3.5.4.5"/>
    </reaction>
</comment>
<comment type="catalytic activity">
    <reaction>
        <text>2'-deoxycytidine + H2O + H(+) = 2'-deoxyuridine + NH4(+)</text>
        <dbReference type="Rhea" id="RHEA:13433"/>
        <dbReference type="ChEBI" id="CHEBI:15377"/>
        <dbReference type="ChEBI" id="CHEBI:15378"/>
        <dbReference type="ChEBI" id="CHEBI:15698"/>
        <dbReference type="ChEBI" id="CHEBI:16450"/>
        <dbReference type="ChEBI" id="CHEBI:28938"/>
        <dbReference type="EC" id="3.5.4.5"/>
    </reaction>
</comment>
<comment type="cofactor">
    <cofactor evidence="1">
        <name>Zn(2+)</name>
        <dbReference type="ChEBI" id="CHEBI:29105"/>
    </cofactor>
    <text evidence="1">Binds 1 zinc ion per subunit.</text>
</comment>
<comment type="subunit">
    <text evidence="1">Homodimer.</text>
</comment>
<comment type="similarity">
    <text evidence="3">Belongs to the cytidine and deoxycytidylate deaminase family.</text>
</comment>
<comment type="sequence caution" evidence="3">
    <conflict type="erroneous termination">
        <sequence resource="EMBL-CDS" id="AAC69568"/>
    </conflict>
    <text>Extended C-terminus.</text>
</comment>
<name>CDA3_ARATH</name>
<reference key="1">
    <citation type="submission" date="1999-01" db="EMBL/GenBank/DDBJ databases">
        <title>Cytidine deaminases in Arabidopsis thaliana: a gene family of eight members are located within a 24 kb region.</title>
        <authorList>
            <person name="Sanchez H."/>
            <person name="Schuster W."/>
        </authorList>
    </citation>
    <scope>NUCLEOTIDE SEQUENCE [GENOMIC DNA]</scope>
    <source>
        <strain>cv. Columbia</strain>
    </source>
</reference>
<reference key="2">
    <citation type="submission" date="1999-06" db="EMBL/GenBank/DDBJ databases">
        <title>Cloning and characterisation of a cytidine deaminase gene family from Arabidopsis thaliana.</title>
        <authorList>
            <person name="Faivre-Nitschke S.E."/>
            <person name="Grienenberger J.M."/>
            <person name="Gualberto J.M."/>
        </authorList>
    </citation>
    <scope>NUCLEOTIDE SEQUENCE [GENOMIC DNA]</scope>
    <source>
        <strain>cv. Landsberg erecta</strain>
    </source>
</reference>
<reference key="3">
    <citation type="journal article" date="1999" name="Nature">
        <title>Sequence and analysis of chromosome 4 of the plant Arabidopsis thaliana.</title>
        <authorList>
            <person name="Mayer K.F.X."/>
            <person name="Schueller C."/>
            <person name="Wambutt R."/>
            <person name="Murphy G."/>
            <person name="Volckaert G."/>
            <person name="Pohl T."/>
            <person name="Duesterhoeft A."/>
            <person name="Stiekema W."/>
            <person name="Entian K.-D."/>
            <person name="Terryn N."/>
            <person name="Harris B."/>
            <person name="Ansorge W."/>
            <person name="Brandt P."/>
            <person name="Grivell L.A."/>
            <person name="Rieger M."/>
            <person name="Weichselgartner M."/>
            <person name="de Simone V."/>
            <person name="Obermaier B."/>
            <person name="Mache R."/>
            <person name="Mueller M."/>
            <person name="Kreis M."/>
            <person name="Delseny M."/>
            <person name="Puigdomenech P."/>
            <person name="Watson M."/>
            <person name="Schmidtheini T."/>
            <person name="Reichert B."/>
            <person name="Portetelle D."/>
            <person name="Perez-Alonso M."/>
            <person name="Boutry M."/>
            <person name="Bancroft I."/>
            <person name="Vos P."/>
            <person name="Hoheisel J."/>
            <person name="Zimmermann W."/>
            <person name="Wedler H."/>
            <person name="Ridley P."/>
            <person name="Langham S.-A."/>
            <person name="McCullagh B."/>
            <person name="Bilham L."/>
            <person name="Robben J."/>
            <person name="van der Schueren J."/>
            <person name="Grymonprez B."/>
            <person name="Chuang Y.-J."/>
            <person name="Vandenbussche F."/>
            <person name="Braeken M."/>
            <person name="Weltjens I."/>
            <person name="Voet M."/>
            <person name="Bastiaens I."/>
            <person name="Aert R."/>
            <person name="Defoor E."/>
            <person name="Weitzenegger T."/>
            <person name="Bothe G."/>
            <person name="Ramsperger U."/>
            <person name="Hilbert H."/>
            <person name="Braun M."/>
            <person name="Holzer E."/>
            <person name="Brandt A."/>
            <person name="Peters S."/>
            <person name="van Staveren M."/>
            <person name="Dirkse W."/>
            <person name="Mooijman P."/>
            <person name="Klein Lankhorst R."/>
            <person name="Rose M."/>
            <person name="Hauf J."/>
            <person name="Koetter P."/>
            <person name="Berneiser S."/>
            <person name="Hempel S."/>
            <person name="Feldpausch M."/>
            <person name="Lamberth S."/>
            <person name="Van den Daele H."/>
            <person name="De Keyser A."/>
            <person name="Buysshaert C."/>
            <person name="Gielen J."/>
            <person name="Villarroel R."/>
            <person name="De Clercq R."/>
            <person name="van Montagu M."/>
            <person name="Rogers J."/>
            <person name="Cronin A."/>
            <person name="Quail M.A."/>
            <person name="Bray-Allen S."/>
            <person name="Clark L."/>
            <person name="Doggett J."/>
            <person name="Hall S."/>
            <person name="Kay M."/>
            <person name="Lennard N."/>
            <person name="McLay K."/>
            <person name="Mayes R."/>
            <person name="Pettett A."/>
            <person name="Rajandream M.A."/>
            <person name="Lyne M."/>
            <person name="Benes V."/>
            <person name="Rechmann S."/>
            <person name="Borkova D."/>
            <person name="Bloecker H."/>
            <person name="Scharfe M."/>
            <person name="Grimm M."/>
            <person name="Loehnert T.-H."/>
            <person name="Dose S."/>
            <person name="de Haan M."/>
            <person name="Maarse A.C."/>
            <person name="Schaefer M."/>
            <person name="Mueller-Auer S."/>
            <person name="Gabel C."/>
            <person name="Fuchs M."/>
            <person name="Fartmann B."/>
            <person name="Granderath K."/>
            <person name="Dauner D."/>
            <person name="Herzl A."/>
            <person name="Neumann S."/>
            <person name="Argiriou A."/>
            <person name="Vitale D."/>
            <person name="Liguori R."/>
            <person name="Piravandi E."/>
            <person name="Massenet O."/>
            <person name="Quigley F."/>
            <person name="Clabauld G."/>
            <person name="Muendlein A."/>
            <person name="Felber R."/>
            <person name="Schnabl S."/>
            <person name="Hiller R."/>
            <person name="Schmidt W."/>
            <person name="Lecharny A."/>
            <person name="Aubourg S."/>
            <person name="Chefdor F."/>
            <person name="Cooke R."/>
            <person name="Berger C."/>
            <person name="Monfort A."/>
            <person name="Casacuberta E."/>
            <person name="Gibbons T."/>
            <person name="Weber N."/>
            <person name="Vandenbol M."/>
            <person name="Bargues M."/>
            <person name="Terol J."/>
            <person name="Torres A."/>
            <person name="Perez-Perez A."/>
            <person name="Purnelle B."/>
            <person name="Bent E."/>
            <person name="Johnson S."/>
            <person name="Tacon D."/>
            <person name="Jesse T."/>
            <person name="Heijnen L."/>
            <person name="Schwarz S."/>
            <person name="Scholler P."/>
            <person name="Heber S."/>
            <person name="Francs P."/>
            <person name="Bielke C."/>
            <person name="Frishman D."/>
            <person name="Haase D."/>
            <person name="Lemcke K."/>
            <person name="Mewes H.-W."/>
            <person name="Stocker S."/>
            <person name="Zaccaria P."/>
            <person name="Bevan M."/>
            <person name="Wilson R.K."/>
            <person name="de la Bastide M."/>
            <person name="Habermann K."/>
            <person name="Parnell L."/>
            <person name="Dedhia N."/>
            <person name="Gnoj L."/>
            <person name="Schutz K."/>
            <person name="Huang E."/>
            <person name="Spiegel L."/>
            <person name="Sekhon M."/>
            <person name="Murray J."/>
            <person name="Sheet P."/>
            <person name="Cordes M."/>
            <person name="Abu-Threideh J."/>
            <person name="Stoneking T."/>
            <person name="Kalicki J."/>
            <person name="Graves T."/>
            <person name="Harmon G."/>
            <person name="Edwards J."/>
            <person name="Latreille P."/>
            <person name="Courtney L."/>
            <person name="Cloud J."/>
            <person name="Abbott A."/>
            <person name="Scott K."/>
            <person name="Johnson D."/>
            <person name="Minx P."/>
            <person name="Bentley D."/>
            <person name="Fulton B."/>
            <person name="Miller N."/>
            <person name="Greco T."/>
            <person name="Kemp K."/>
            <person name="Kramer J."/>
            <person name="Fulton L."/>
            <person name="Mardis E."/>
            <person name="Dante M."/>
            <person name="Pepin K."/>
            <person name="Hillier L.W."/>
            <person name="Nelson J."/>
            <person name="Spieth J."/>
            <person name="Ryan E."/>
            <person name="Andrews S."/>
            <person name="Geisel C."/>
            <person name="Layman D."/>
            <person name="Du H."/>
            <person name="Ali J."/>
            <person name="Berghoff A."/>
            <person name="Jones K."/>
            <person name="Drone K."/>
            <person name="Cotton M."/>
            <person name="Joshu C."/>
            <person name="Antonoiu B."/>
            <person name="Zidanic M."/>
            <person name="Strong C."/>
            <person name="Sun H."/>
            <person name="Lamar B."/>
            <person name="Yordan C."/>
            <person name="Ma P."/>
            <person name="Zhong J."/>
            <person name="Preston R."/>
            <person name="Vil D."/>
            <person name="Shekher M."/>
            <person name="Matero A."/>
            <person name="Shah R."/>
            <person name="Swaby I.K."/>
            <person name="O'Shaughnessy A."/>
            <person name="Rodriguez M."/>
            <person name="Hoffman J."/>
            <person name="Till S."/>
            <person name="Granat S."/>
            <person name="Shohdy N."/>
            <person name="Hasegawa A."/>
            <person name="Hameed A."/>
            <person name="Lodhi M."/>
            <person name="Johnson A."/>
            <person name="Chen E."/>
            <person name="Marra M.A."/>
            <person name="Martienssen R."/>
            <person name="McCombie W.R."/>
        </authorList>
    </citation>
    <scope>NUCLEOTIDE SEQUENCE [LARGE SCALE GENOMIC DNA]</scope>
    <source>
        <strain>cv. Columbia</strain>
    </source>
</reference>
<reference key="4">
    <citation type="journal article" date="2017" name="Plant J.">
        <title>Araport11: a complete reannotation of the Arabidopsis thaliana reference genome.</title>
        <authorList>
            <person name="Cheng C.Y."/>
            <person name="Krishnakumar V."/>
            <person name="Chan A.P."/>
            <person name="Thibaud-Nissen F."/>
            <person name="Schobel S."/>
            <person name="Town C.D."/>
        </authorList>
    </citation>
    <scope>GENOME REANNOTATION</scope>
    <source>
        <strain>cv. Columbia</strain>
    </source>
</reference>
<reference key="5">
    <citation type="journal article" date="2006" name="Plant Biotechnol. J.">
        <title>Simultaneous high-throughput recombinational cloning of open reading frames in closed and open configurations.</title>
        <authorList>
            <person name="Underwood B.A."/>
            <person name="Vanderhaeghen R."/>
            <person name="Whitford R."/>
            <person name="Town C.D."/>
            <person name="Hilson P."/>
        </authorList>
    </citation>
    <scope>NUCLEOTIDE SEQUENCE [LARGE SCALE MRNA]</scope>
    <source>
        <strain>cv. Columbia</strain>
    </source>
</reference>
<sequence>MAQDQYKFVFTAKEAESEGVTEPMRLPNLIGKAMSLALAPISKYKVGAVGRARSGRIYLGVNVELPGLPLHHSIHAEQFLVTNLALNSEKGLHLLAVTISTDGNDFGAPCGNCRQFLMEISKALNIKILLKSKYEAEGSFKSLRLLLPDRFSPDDVLPKGSPLLLEKRHNCLSLSGSAEEICSSDCSHLKCKALAAANNSFSPYTNSPSGVALQDDDGNWYRG</sequence>
<organism>
    <name type="scientific">Arabidopsis thaliana</name>
    <name type="common">Mouse-ear cress</name>
    <dbReference type="NCBI Taxonomy" id="3702"/>
    <lineage>
        <taxon>Eukaryota</taxon>
        <taxon>Viridiplantae</taxon>
        <taxon>Streptophyta</taxon>
        <taxon>Embryophyta</taxon>
        <taxon>Tracheophyta</taxon>
        <taxon>Spermatophyta</taxon>
        <taxon>Magnoliopsida</taxon>
        <taxon>eudicotyledons</taxon>
        <taxon>Gunneridae</taxon>
        <taxon>Pentapetalae</taxon>
        <taxon>rosids</taxon>
        <taxon>malvids</taxon>
        <taxon>Brassicales</taxon>
        <taxon>Brassicaceae</taxon>
        <taxon>Camelineae</taxon>
        <taxon>Arabidopsis</taxon>
    </lineage>
</organism>